<sequence>MSHPALTQLRALRYFDAIPALEPHLLDWLLLEDSMTKRFEQQGKRVSVTLIREAFVGQSEVEEASGLLPSESRYWLREILLCADGEPWLAGRTVVPESTLCGPEQVLQHLGKTPLGRYLFTSSTLTRDFIEIGRDATLWGRRSRLRLSGKPLLLTELFLPASPLY</sequence>
<name>UBIC_SALTY</name>
<reference key="1">
    <citation type="journal article" date="2001" name="Nature">
        <title>Complete genome sequence of Salmonella enterica serovar Typhimurium LT2.</title>
        <authorList>
            <person name="McClelland M."/>
            <person name="Sanderson K.E."/>
            <person name="Spieth J."/>
            <person name="Clifton S.W."/>
            <person name="Latreille P."/>
            <person name="Courtney L."/>
            <person name="Porwollik S."/>
            <person name="Ali J."/>
            <person name="Dante M."/>
            <person name="Du F."/>
            <person name="Hou S."/>
            <person name="Layman D."/>
            <person name="Leonard S."/>
            <person name="Nguyen C."/>
            <person name="Scott K."/>
            <person name="Holmes A."/>
            <person name="Grewal N."/>
            <person name="Mulvaney E."/>
            <person name="Ryan E."/>
            <person name="Sun H."/>
            <person name="Florea L."/>
            <person name="Miller W."/>
            <person name="Stoneking T."/>
            <person name="Nhan M."/>
            <person name="Waterston R."/>
            <person name="Wilson R.K."/>
        </authorList>
    </citation>
    <scope>NUCLEOTIDE SEQUENCE [LARGE SCALE GENOMIC DNA]</scope>
    <source>
        <strain>LT2 / SGSC1412 / ATCC 700720</strain>
    </source>
</reference>
<comment type="function">
    <text evidence="1">Removes the pyruvyl group from chorismate, with concomitant aromatization of the ring, to provide 4-hydroxybenzoate (4HB) for the ubiquinone pathway.</text>
</comment>
<comment type="catalytic activity">
    <reaction evidence="1">
        <text>chorismate = 4-hydroxybenzoate + pyruvate</text>
        <dbReference type="Rhea" id="RHEA:16505"/>
        <dbReference type="ChEBI" id="CHEBI:15361"/>
        <dbReference type="ChEBI" id="CHEBI:17879"/>
        <dbReference type="ChEBI" id="CHEBI:29748"/>
        <dbReference type="EC" id="4.1.3.40"/>
    </reaction>
</comment>
<comment type="pathway">
    <text evidence="1">Cofactor biosynthesis; ubiquinone biosynthesis.</text>
</comment>
<comment type="subunit">
    <text evidence="1">Monomer.</text>
</comment>
<comment type="subcellular location">
    <subcellularLocation>
        <location evidence="1">Cytoplasm</location>
    </subcellularLocation>
</comment>
<comment type="similarity">
    <text evidence="1">Belongs to the UbiC family.</text>
</comment>
<evidence type="ECO:0000255" key="1">
    <source>
        <dbReference type="HAMAP-Rule" id="MF_01632"/>
    </source>
</evidence>
<feature type="chain" id="PRO_0000240571" description="Chorismate pyruvate-lyase">
    <location>
        <begin position="1"/>
        <end position="165"/>
    </location>
</feature>
<feature type="binding site" evidence="1">
    <location>
        <position position="35"/>
    </location>
    <ligand>
        <name>substrate</name>
    </ligand>
</feature>
<feature type="binding site" evidence="1">
    <location>
        <position position="77"/>
    </location>
    <ligand>
        <name>substrate</name>
    </ligand>
</feature>
<feature type="binding site" evidence="1">
    <location>
        <position position="115"/>
    </location>
    <ligand>
        <name>substrate</name>
    </ligand>
</feature>
<feature type="binding site" evidence="1">
    <location>
        <position position="156"/>
    </location>
    <ligand>
        <name>substrate</name>
    </ligand>
</feature>
<proteinExistence type="inferred from homology"/>
<organism>
    <name type="scientific">Salmonella typhimurium (strain LT2 / SGSC1412 / ATCC 700720)</name>
    <dbReference type="NCBI Taxonomy" id="99287"/>
    <lineage>
        <taxon>Bacteria</taxon>
        <taxon>Pseudomonadati</taxon>
        <taxon>Pseudomonadota</taxon>
        <taxon>Gammaproteobacteria</taxon>
        <taxon>Enterobacterales</taxon>
        <taxon>Enterobacteriaceae</taxon>
        <taxon>Salmonella</taxon>
    </lineage>
</organism>
<dbReference type="EC" id="4.1.3.40" evidence="1"/>
<dbReference type="EMBL" id="AE006468">
    <property type="protein sequence ID" value="AAL23057.1"/>
    <property type="molecule type" value="Genomic_DNA"/>
</dbReference>
<dbReference type="RefSeq" id="NP_463098.1">
    <property type="nucleotide sequence ID" value="NC_003197.2"/>
</dbReference>
<dbReference type="RefSeq" id="WP_000019219.1">
    <property type="nucleotide sequence ID" value="NC_003197.2"/>
</dbReference>
<dbReference type="SMR" id="Q8ZKI0"/>
<dbReference type="STRING" id="99287.STM4233"/>
<dbReference type="PaxDb" id="99287-STM4233"/>
<dbReference type="GeneID" id="1255759"/>
<dbReference type="KEGG" id="stm:STM4233"/>
<dbReference type="PATRIC" id="fig|99287.12.peg.4453"/>
<dbReference type="HOGENOM" id="CLU_096824_1_0_6"/>
<dbReference type="OMA" id="ELWGRRS"/>
<dbReference type="PhylomeDB" id="Q8ZKI0"/>
<dbReference type="BioCyc" id="SENT99287:STM4233-MONOMER"/>
<dbReference type="UniPathway" id="UPA00232"/>
<dbReference type="Proteomes" id="UP000001014">
    <property type="component" value="Chromosome"/>
</dbReference>
<dbReference type="GO" id="GO:0005829">
    <property type="term" value="C:cytosol"/>
    <property type="evidence" value="ECO:0000318"/>
    <property type="project" value="GO_Central"/>
</dbReference>
<dbReference type="GO" id="GO:0008813">
    <property type="term" value="F:chorismate lyase activity"/>
    <property type="evidence" value="ECO:0000318"/>
    <property type="project" value="GO_Central"/>
</dbReference>
<dbReference type="GO" id="GO:0042866">
    <property type="term" value="P:pyruvate biosynthetic process"/>
    <property type="evidence" value="ECO:0007669"/>
    <property type="project" value="UniProtKB-UniRule"/>
</dbReference>
<dbReference type="GO" id="GO:0006744">
    <property type="term" value="P:ubiquinone biosynthetic process"/>
    <property type="evidence" value="ECO:0000318"/>
    <property type="project" value="GO_Central"/>
</dbReference>
<dbReference type="FunFam" id="3.40.1410.10:FF:000002">
    <property type="entry name" value="Chorismate pyruvate-lyase"/>
    <property type="match status" value="1"/>
</dbReference>
<dbReference type="Gene3D" id="3.40.1410.10">
    <property type="entry name" value="Chorismate lyase-like"/>
    <property type="match status" value="1"/>
</dbReference>
<dbReference type="HAMAP" id="MF_01632">
    <property type="entry name" value="UbiC"/>
    <property type="match status" value="1"/>
</dbReference>
<dbReference type="InterPro" id="IPR007440">
    <property type="entry name" value="Chorismate--pyruvate_lyase"/>
</dbReference>
<dbReference type="InterPro" id="IPR028978">
    <property type="entry name" value="Chorismate_lyase_/UTRA_dom_sf"/>
</dbReference>
<dbReference type="NCBIfam" id="NF008656">
    <property type="entry name" value="PRK11655.1"/>
    <property type="match status" value="1"/>
</dbReference>
<dbReference type="PANTHER" id="PTHR38683">
    <property type="entry name" value="CHORISMATE PYRUVATE-LYASE"/>
    <property type="match status" value="1"/>
</dbReference>
<dbReference type="PANTHER" id="PTHR38683:SF1">
    <property type="entry name" value="CHORISMATE PYRUVATE-LYASE"/>
    <property type="match status" value="1"/>
</dbReference>
<dbReference type="Pfam" id="PF04345">
    <property type="entry name" value="Chor_lyase"/>
    <property type="match status" value="1"/>
</dbReference>
<dbReference type="SUPFAM" id="SSF64288">
    <property type="entry name" value="Chorismate lyase-like"/>
    <property type="match status" value="1"/>
</dbReference>
<protein>
    <recommendedName>
        <fullName evidence="1">Chorismate pyruvate-lyase</fullName>
        <shortName evidence="1">CL</shortName>
        <shortName evidence="1">CPL</shortName>
        <ecNumber evidence="1">4.1.3.40</ecNumber>
    </recommendedName>
</protein>
<accession>Q8ZKI0</accession>
<gene>
    <name evidence="1" type="primary">ubiC</name>
    <name type="ordered locus">STM4233</name>
</gene>
<keyword id="KW-0963">Cytoplasm</keyword>
<keyword id="KW-0456">Lyase</keyword>
<keyword id="KW-0670">Pyruvate</keyword>
<keyword id="KW-1185">Reference proteome</keyword>
<keyword id="KW-0831">Ubiquinone biosynthesis</keyword>